<accession>Q2SDU5</accession>
<protein>
    <recommendedName>
        <fullName evidence="1">Flagellar P-ring protein 2</fullName>
    </recommendedName>
    <alternativeName>
        <fullName evidence="1">Basal body P-ring protein 2</fullName>
    </alternativeName>
</protein>
<sequence>MHEVSDKTNAIHPLQRVSRALFALGLLCFAAMAGAERIKDIATVEGVRSNQIVGYGLVVGLDGTGDKAPFTDQTFRNMMNRFGITIPAGTDPKLKNVAAVSVHADLPAFSKPGQKIDITVSSVGNAKSLRGGSLLMTNLKGADGKTYAVAQGNLVVGGFGAGGADGSSITVNVPSVGRIPNGATVERAVPSSFSHGDTLTLNLSSPDFTTAKRVQDRINDLLGPGLAQAVDAASIRVMAPREASQRVGFLSILENLEVEPGQEAAKIVINSRTGTIVVGQNVKVLPAAVTHGNLTVTITEDFGVSQPNALAGGDTVVVPQTDVNVEQEPSRMFKFGPAATLNDIVRAVNQVGAAPGDVMAVLEALKQAGALKAELIVI</sequence>
<keyword id="KW-0975">Bacterial flagellum</keyword>
<keyword id="KW-0574">Periplasm</keyword>
<keyword id="KW-1185">Reference proteome</keyword>
<keyword id="KW-0732">Signal</keyword>
<feature type="signal peptide" evidence="1">
    <location>
        <begin position="1"/>
        <end position="33"/>
    </location>
</feature>
<feature type="chain" id="PRO_0000236303" description="Flagellar P-ring protein 2">
    <location>
        <begin position="34"/>
        <end position="378"/>
    </location>
</feature>
<proteinExistence type="inferred from homology"/>
<evidence type="ECO:0000255" key="1">
    <source>
        <dbReference type="HAMAP-Rule" id="MF_00416"/>
    </source>
</evidence>
<organism>
    <name type="scientific">Hahella chejuensis (strain KCTC 2396)</name>
    <dbReference type="NCBI Taxonomy" id="349521"/>
    <lineage>
        <taxon>Bacteria</taxon>
        <taxon>Pseudomonadati</taxon>
        <taxon>Pseudomonadota</taxon>
        <taxon>Gammaproteobacteria</taxon>
        <taxon>Oceanospirillales</taxon>
        <taxon>Hahellaceae</taxon>
        <taxon>Hahella</taxon>
    </lineage>
</organism>
<name>FLGI2_HAHCH</name>
<reference key="1">
    <citation type="journal article" date="2005" name="Nucleic Acids Res.">
        <title>Genomic blueprint of Hahella chejuensis, a marine microbe producing an algicidal agent.</title>
        <authorList>
            <person name="Jeong H."/>
            <person name="Yim J.H."/>
            <person name="Lee C."/>
            <person name="Choi S.-H."/>
            <person name="Park Y.K."/>
            <person name="Yoon S.H."/>
            <person name="Hur C.-G."/>
            <person name="Kang H.-Y."/>
            <person name="Kim D."/>
            <person name="Lee H.H."/>
            <person name="Park K.H."/>
            <person name="Park S.-H."/>
            <person name="Park H.-S."/>
            <person name="Lee H.K."/>
            <person name="Oh T.K."/>
            <person name="Kim J.F."/>
        </authorList>
    </citation>
    <scope>NUCLEOTIDE SEQUENCE [LARGE SCALE GENOMIC DNA]</scope>
    <source>
        <strain>KCTC 2396</strain>
    </source>
</reference>
<dbReference type="EMBL" id="CP000155">
    <property type="protein sequence ID" value="ABC31179.1"/>
    <property type="molecule type" value="Genomic_DNA"/>
</dbReference>
<dbReference type="RefSeq" id="WP_011398246.1">
    <property type="nucleotide sequence ID" value="NC_007645.1"/>
</dbReference>
<dbReference type="SMR" id="Q2SDU5"/>
<dbReference type="STRING" id="349521.HCH_04475"/>
<dbReference type="KEGG" id="hch:HCH_04475"/>
<dbReference type="eggNOG" id="COG1706">
    <property type="taxonomic scope" value="Bacteria"/>
</dbReference>
<dbReference type="HOGENOM" id="CLU_045235_1_0_6"/>
<dbReference type="OrthoDB" id="9786431at2"/>
<dbReference type="Proteomes" id="UP000000238">
    <property type="component" value="Chromosome"/>
</dbReference>
<dbReference type="GO" id="GO:0009428">
    <property type="term" value="C:bacterial-type flagellum basal body, distal rod, P ring"/>
    <property type="evidence" value="ECO:0007669"/>
    <property type="project" value="InterPro"/>
</dbReference>
<dbReference type="GO" id="GO:0030288">
    <property type="term" value="C:outer membrane-bounded periplasmic space"/>
    <property type="evidence" value="ECO:0007669"/>
    <property type="project" value="InterPro"/>
</dbReference>
<dbReference type="GO" id="GO:0005198">
    <property type="term" value="F:structural molecule activity"/>
    <property type="evidence" value="ECO:0007669"/>
    <property type="project" value="InterPro"/>
</dbReference>
<dbReference type="GO" id="GO:0071973">
    <property type="term" value="P:bacterial-type flagellum-dependent cell motility"/>
    <property type="evidence" value="ECO:0007669"/>
    <property type="project" value="InterPro"/>
</dbReference>
<dbReference type="HAMAP" id="MF_00416">
    <property type="entry name" value="FlgI"/>
    <property type="match status" value="1"/>
</dbReference>
<dbReference type="InterPro" id="IPR001782">
    <property type="entry name" value="Flag_FlgI"/>
</dbReference>
<dbReference type="NCBIfam" id="NF003676">
    <property type="entry name" value="PRK05303.1"/>
    <property type="match status" value="1"/>
</dbReference>
<dbReference type="PANTHER" id="PTHR30381">
    <property type="entry name" value="FLAGELLAR P-RING PERIPLASMIC PROTEIN FLGI"/>
    <property type="match status" value="1"/>
</dbReference>
<dbReference type="PANTHER" id="PTHR30381:SF0">
    <property type="entry name" value="FLAGELLAR P-RING PROTEIN"/>
    <property type="match status" value="1"/>
</dbReference>
<dbReference type="Pfam" id="PF02119">
    <property type="entry name" value="FlgI"/>
    <property type="match status" value="1"/>
</dbReference>
<dbReference type="PRINTS" id="PR01010">
    <property type="entry name" value="FLGPRINGFLGI"/>
</dbReference>
<comment type="function">
    <text evidence="1">Assembles around the rod to form the L-ring and probably protects the motor/basal body from shearing forces during rotation.</text>
</comment>
<comment type="subunit">
    <text evidence="1">The basal body constitutes a major portion of the flagellar organelle and consists of four rings (L,P,S, and M) mounted on a central rod.</text>
</comment>
<comment type="subcellular location">
    <subcellularLocation>
        <location evidence="1">Periplasm</location>
    </subcellularLocation>
    <subcellularLocation>
        <location evidence="1">Bacterial flagellum basal body</location>
    </subcellularLocation>
</comment>
<comment type="similarity">
    <text evidence="1">Belongs to the FlgI family.</text>
</comment>
<gene>
    <name evidence="1" type="primary">flgI2</name>
    <name type="ordered locus">HCH_04475</name>
</gene>